<keyword id="KW-0021">Allosteric enzyme</keyword>
<keyword id="KW-0328">Glycosyltransferase</keyword>
<keyword id="KW-0342">GTP-binding</keyword>
<keyword id="KW-0460">Magnesium</keyword>
<keyword id="KW-0547">Nucleotide-binding</keyword>
<keyword id="KW-1185">Reference proteome</keyword>
<keyword id="KW-0808">Transferase</keyword>
<name>UPP_NEIG1</name>
<protein>
    <recommendedName>
        <fullName evidence="1">Uracil phosphoribosyltransferase</fullName>
        <ecNumber evidence="1">2.4.2.9</ecNumber>
    </recommendedName>
    <alternativeName>
        <fullName evidence="1">UMP pyrophosphorylase</fullName>
    </alternativeName>
    <alternativeName>
        <fullName evidence="1">UPRTase</fullName>
    </alternativeName>
</protein>
<dbReference type="EC" id="2.4.2.9" evidence="1"/>
<dbReference type="EMBL" id="AE004969">
    <property type="protein sequence ID" value="AAW89097.1"/>
    <property type="molecule type" value="Genomic_DNA"/>
</dbReference>
<dbReference type="RefSeq" id="WP_003690802.1">
    <property type="nucleotide sequence ID" value="NC_002946.2"/>
</dbReference>
<dbReference type="RefSeq" id="YP_207509.1">
    <property type="nucleotide sequence ID" value="NC_002946.2"/>
</dbReference>
<dbReference type="SMR" id="Q5F9P0"/>
<dbReference type="STRING" id="242231.NGO_0353"/>
<dbReference type="GeneID" id="66752692"/>
<dbReference type="KEGG" id="ngo:NGO_0353"/>
<dbReference type="PATRIC" id="fig|242231.10.peg.429"/>
<dbReference type="HOGENOM" id="CLU_067096_2_2_4"/>
<dbReference type="UniPathway" id="UPA00574">
    <property type="reaction ID" value="UER00636"/>
</dbReference>
<dbReference type="Proteomes" id="UP000000535">
    <property type="component" value="Chromosome"/>
</dbReference>
<dbReference type="GO" id="GO:0005525">
    <property type="term" value="F:GTP binding"/>
    <property type="evidence" value="ECO:0007669"/>
    <property type="project" value="UniProtKB-KW"/>
</dbReference>
<dbReference type="GO" id="GO:0000287">
    <property type="term" value="F:magnesium ion binding"/>
    <property type="evidence" value="ECO:0007669"/>
    <property type="project" value="UniProtKB-UniRule"/>
</dbReference>
<dbReference type="GO" id="GO:0004845">
    <property type="term" value="F:uracil phosphoribosyltransferase activity"/>
    <property type="evidence" value="ECO:0007669"/>
    <property type="project" value="UniProtKB-UniRule"/>
</dbReference>
<dbReference type="GO" id="GO:0044206">
    <property type="term" value="P:UMP salvage"/>
    <property type="evidence" value="ECO:0007669"/>
    <property type="project" value="UniProtKB-UniRule"/>
</dbReference>
<dbReference type="GO" id="GO:0006223">
    <property type="term" value="P:uracil salvage"/>
    <property type="evidence" value="ECO:0007669"/>
    <property type="project" value="InterPro"/>
</dbReference>
<dbReference type="CDD" id="cd06223">
    <property type="entry name" value="PRTases_typeI"/>
    <property type="match status" value="1"/>
</dbReference>
<dbReference type="FunFam" id="3.40.50.2020:FF:000003">
    <property type="entry name" value="Uracil phosphoribosyltransferase"/>
    <property type="match status" value="1"/>
</dbReference>
<dbReference type="Gene3D" id="3.40.50.2020">
    <property type="match status" value="1"/>
</dbReference>
<dbReference type="HAMAP" id="MF_01218_B">
    <property type="entry name" value="Upp_B"/>
    <property type="match status" value="1"/>
</dbReference>
<dbReference type="InterPro" id="IPR000836">
    <property type="entry name" value="PRibTrfase_dom"/>
</dbReference>
<dbReference type="InterPro" id="IPR029057">
    <property type="entry name" value="PRTase-like"/>
</dbReference>
<dbReference type="InterPro" id="IPR034332">
    <property type="entry name" value="Upp_B"/>
</dbReference>
<dbReference type="InterPro" id="IPR050054">
    <property type="entry name" value="UPRTase/APRTase"/>
</dbReference>
<dbReference type="InterPro" id="IPR005765">
    <property type="entry name" value="Ura_phspho_trans"/>
</dbReference>
<dbReference type="NCBIfam" id="NF001097">
    <property type="entry name" value="PRK00129.1"/>
    <property type="match status" value="1"/>
</dbReference>
<dbReference type="NCBIfam" id="TIGR01091">
    <property type="entry name" value="upp"/>
    <property type="match status" value="1"/>
</dbReference>
<dbReference type="PANTHER" id="PTHR32315">
    <property type="entry name" value="ADENINE PHOSPHORIBOSYLTRANSFERASE"/>
    <property type="match status" value="1"/>
</dbReference>
<dbReference type="PANTHER" id="PTHR32315:SF4">
    <property type="entry name" value="URACIL PHOSPHORIBOSYLTRANSFERASE, CHLOROPLASTIC"/>
    <property type="match status" value="1"/>
</dbReference>
<dbReference type="Pfam" id="PF14681">
    <property type="entry name" value="UPRTase"/>
    <property type="match status" value="1"/>
</dbReference>
<dbReference type="SUPFAM" id="SSF53271">
    <property type="entry name" value="PRTase-like"/>
    <property type="match status" value="1"/>
</dbReference>
<evidence type="ECO:0000255" key="1">
    <source>
        <dbReference type="HAMAP-Rule" id="MF_01218"/>
    </source>
</evidence>
<organism>
    <name type="scientific">Neisseria gonorrhoeae (strain ATCC 700825 / FA 1090)</name>
    <dbReference type="NCBI Taxonomy" id="242231"/>
    <lineage>
        <taxon>Bacteria</taxon>
        <taxon>Pseudomonadati</taxon>
        <taxon>Pseudomonadota</taxon>
        <taxon>Betaproteobacteria</taxon>
        <taxon>Neisseriales</taxon>
        <taxon>Neisseriaceae</taxon>
        <taxon>Neisseria</taxon>
    </lineage>
</organism>
<sequence length="208" mass="22878">MNVNVINHPLVRHKLTLMREADCSTYKFRTLTTELARLMAYEASRDFEIEKYLIDGWCGQIEGDRIKGKTLTVVPILRAGLGMLDGVLDLIPTAKISVVGLQRDEETLKPISYFEKFVDSMDERPALIIDPMLATGGSMVATIDLLKEKGCRNIKALVLVAAPEGVKAVNDAHPDVTIYTAALDSRLNENGYIIPGLGDAGDKIFGTR</sequence>
<gene>
    <name evidence="1" type="primary">upp</name>
    <name type="ordered locus">NGO_0353</name>
</gene>
<comment type="function">
    <text evidence="1">Catalyzes the conversion of uracil and 5-phospho-alpha-D-ribose 1-diphosphate (PRPP) to UMP and diphosphate.</text>
</comment>
<comment type="catalytic activity">
    <reaction evidence="1">
        <text>UMP + diphosphate = 5-phospho-alpha-D-ribose 1-diphosphate + uracil</text>
        <dbReference type="Rhea" id="RHEA:13017"/>
        <dbReference type="ChEBI" id="CHEBI:17568"/>
        <dbReference type="ChEBI" id="CHEBI:33019"/>
        <dbReference type="ChEBI" id="CHEBI:57865"/>
        <dbReference type="ChEBI" id="CHEBI:58017"/>
        <dbReference type="EC" id="2.4.2.9"/>
    </reaction>
</comment>
<comment type="cofactor">
    <cofactor evidence="1">
        <name>Mg(2+)</name>
        <dbReference type="ChEBI" id="CHEBI:18420"/>
    </cofactor>
    <text evidence="1">Binds 1 Mg(2+) ion per subunit. The magnesium is bound as Mg-PRPP.</text>
</comment>
<comment type="activity regulation">
    <text evidence="1">Allosterically activated by GTP.</text>
</comment>
<comment type="pathway">
    <text evidence="1">Pyrimidine metabolism; UMP biosynthesis via salvage pathway; UMP from uracil: step 1/1.</text>
</comment>
<comment type="similarity">
    <text evidence="1">Belongs to the UPRTase family.</text>
</comment>
<proteinExistence type="inferred from homology"/>
<feature type="chain" id="PRO_1000053748" description="Uracil phosphoribosyltransferase">
    <location>
        <begin position="1"/>
        <end position="208"/>
    </location>
</feature>
<feature type="binding site" evidence="1">
    <location>
        <position position="78"/>
    </location>
    <ligand>
        <name>5-phospho-alpha-D-ribose 1-diphosphate</name>
        <dbReference type="ChEBI" id="CHEBI:58017"/>
    </ligand>
</feature>
<feature type="binding site" evidence="1">
    <location>
        <position position="103"/>
    </location>
    <ligand>
        <name>5-phospho-alpha-D-ribose 1-diphosphate</name>
        <dbReference type="ChEBI" id="CHEBI:58017"/>
    </ligand>
</feature>
<feature type="binding site" evidence="1">
    <location>
        <begin position="130"/>
        <end position="138"/>
    </location>
    <ligand>
        <name>5-phospho-alpha-D-ribose 1-diphosphate</name>
        <dbReference type="ChEBI" id="CHEBI:58017"/>
    </ligand>
</feature>
<feature type="binding site" evidence="1">
    <location>
        <position position="193"/>
    </location>
    <ligand>
        <name>uracil</name>
        <dbReference type="ChEBI" id="CHEBI:17568"/>
    </ligand>
</feature>
<feature type="binding site" evidence="1">
    <location>
        <begin position="198"/>
        <end position="200"/>
    </location>
    <ligand>
        <name>uracil</name>
        <dbReference type="ChEBI" id="CHEBI:17568"/>
    </ligand>
</feature>
<feature type="binding site" evidence="1">
    <location>
        <position position="199"/>
    </location>
    <ligand>
        <name>5-phospho-alpha-D-ribose 1-diphosphate</name>
        <dbReference type="ChEBI" id="CHEBI:58017"/>
    </ligand>
</feature>
<reference key="1">
    <citation type="submission" date="2003-03" db="EMBL/GenBank/DDBJ databases">
        <title>The complete genome sequence of Neisseria gonorrhoeae.</title>
        <authorList>
            <person name="Lewis L.A."/>
            <person name="Gillaspy A.F."/>
            <person name="McLaughlin R.E."/>
            <person name="Gipson M."/>
            <person name="Ducey T.F."/>
            <person name="Ownbey T."/>
            <person name="Hartman K."/>
            <person name="Nydick C."/>
            <person name="Carson M.B."/>
            <person name="Vaughn J."/>
            <person name="Thomson C."/>
            <person name="Song L."/>
            <person name="Lin S."/>
            <person name="Yuan X."/>
            <person name="Najar F."/>
            <person name="Zhan M."/>
            <person name="Ren Q."/>
            <person name="Zhu H."/>
            <person name="Qi S."/>
            <person name="Kenton S.M."/>
            <person name="Lai H."/>
            <person name="White J.D."/>
            <person name="Clifton S."/>
            <person name="Roe B.A."/>
            <person name="Dyer D.W."/>
        </authorList>
    </citation>
    <scope>NUCLEOTIDE SEQUENCE [LARGE SCALE GENOMIC DNA]</scope>
    <source>
        <strain>ATCC 700825 / FA 1090</strain>
    </source>
</reference>
<accession>Q5F9P0</accession>